<gene>
    <name evidence="1" type="primary">ribH</name>
    <name type="ordered locus">SSPA2148</name>
</gene>
<keyword id="KW-0686">Riboflavin biosynthesis</keyword>
<keyword id="KW-0808">Transferase</keyword>
<comment type="function">
    <text evidence="1">Catalyzes the formation of 6,7-dimethyl-8-ribityllumazine by condensation of 5-amino-6-(D-ribitylamino)uracil with 3,4-dihydroxy-2-butanone 4-phosphate. This is the penultimate step in the biosynthesis of riboflavin.</text>
</comment>
<comment type="catalytic activity">
    <reaction evidence="1">
        <text>(2S)-2-hydroxy-3-oxobutyl phosphate + 5-amino-6-(D-ribitylamino)uracil = 6,7-dimethyl-8-(1-D-ribityl)lumazine + phosphate + 2 H2O + H(+)</text>
        <dbReference type="Rhea" id="RHEA:26152"/>
        <dbReference type="ChEBI" id="CHEBI:15377"/>
        <dbReference type="ChEBI" id="CHEBI:15378"/>
        <dbReference type="ChEBI" id="CHEBI:15934"/>
        <dbReference type="ChEBI" id="CHEBI:43474"/>
        <dbReference type="ChEBI" id="CHEBI:58201"/>
        <dbReference type="ChEBI" id="CHEBI:58830"/>
        <dbReference type="EC" id="2.5.1.78"/>
    </reaction>
</comment>
<comment type="pathway">
    <text evidence="1">Cofactor biosynthesis; riboflavin biosynthesis; riboflavin from 2-hydroxy-3-oxobutyl phosphate and 5-amino-6-(D-ribitylamino)uracil: step 1/2.</text>
</comment>
<comment type="subunit">
    <text evidence="1">Forms an icosahedral capsid composed of 60 subunits, arranged as a dodecamer of pentamers.</text>
</comment>
<comment type="similarity">
    <text evidence="1">Belongs to the DMRL synthase family.</text>
</comment>
<protein>
    <recommendedName>
        <fullName evidence="1">6,7-dimethyl-8-ribityllumazine synthase</fullName>
        <shortName evidence="1">DMRL synthase</shortName>
        <shortName evidence="1">LS</shortName>
        <shortName evidence="1">Lumazine synthase</shortName>
        <ecNumber evidence="1">2.5.1.78</ecNumber>
    </recommendedName>
</protein>
<evidence type="ECO:0000255" key="1">
    <source>
        <dbReference type="HAMAP-Rule" id="MF_00178"/>
    </source>
</evidence>
<proteinExistence type="inferred from homology"/>
<accession>B5BDB5</accession>
<sequence length="156" mass="16008">MNIIKANVAAPDARVAITIARFNQFINDSLLDGAVDALTRIGQVKDDNITVVWVPGAYELPLATEALAKSGKYDAVVALGTVIRGGTAHFEYVAGGASNGLASVAQDSGVPVAFGVLTTESIEQAIERAGTKAGNKGAEAALTALEMINVLKAIKA</sequence>
<reference key="1">
    <citation type="journal article" date="2009" name="BMC Genomics">
        <title>Pseudogene accumulation in the evolutionary histories of Salmonella enterica serovars Paratyphi A and Typhi.</title>
        <authorList>
            <person name="Holt K.E."/>
            <person name="Thomson N.R."/>
            <person name="Wain J."/>
            <person name="Langridge G.C."/>
            <person name="Hasan R."/>
            <person name="Bhutta Z.A."/>
            <person name="Quail M.A."/>
            <person name="Norbertczak H."/>
            <person name="Walker D."/>
            <person name="Simmonds M."/>
            <person name="White B."/>
            <person name="Bason N."/>
            <person name="Mungall K."/>
            <person name="Dougan G."/>
            <person name="Parkhill J."/>
        </authorList>
    </citation>
    <scope>NUCLEOTIDE SEQUENCE [LARGE SCALE GENOMIC DNA]</scope>
    <source>
        <strain>AKU_12601</strain>
    </source>
</reference>
<dbReference type="EC" id="2.5.1.78" evidence="1"/>
<dbReference type="EMBL" id="FM200053">
    <property type="protein sequence ID" value="CAR60358.1"/>
    <property type="molecule type" value="Genomic_DNA"/>
</dbReference>
<dbReference type="SMR" id="B5BDB5"/>
<dbReference type="KEGG" id="sek:SSPA2148"/>
<dbReference type="HOGENOM" id="CLU_089358_1_1_6"/>
<dbReference type="UniPathway" id="UPA00275">
    <property type="reaction ID" value="UER00404"/>
</dbReference>
<dbReference type="Proteomes" id="UP000001869">
    <property type="component" value="Chromosome"/>
</dbReference>
<dbReference type="GO" id="GO:0005829">
    <property type="term" value="C:cytosol"/>
    <property type="evidence" value="ECO:0007669"/>
    <property type="project" value="TreeGrafter"/>
</dbReference>
<dbReference type="GO" id="GO:0009349">
    <property type="term" value="C:riboflavin synthase complex"/>
    <property type="evidence" value="ECO:0007669"/>
    <property type="project" value="InterPro"/>
</dbReference>
<dbReference type="GO" id="GO:0000906">
    <property type="term" value="F:6,7-dimethyl-8-ribityllumazine synthase activity"/>
    <property type="evidence" value="ECO:0007669"/>
    <property type="project" value="UniProtKB-UniRule"/>
</dbReference>
<dbReference type="GO" id="GO:0009231">
    <property type="term" value="P:riboflavin biosynthetic process"/>
    <property type="evidence" value="ECO:0007669"/>
    <property type="project" value="UniProtKB-UniRule"/>
</dbReference>
<dbReference type="CDD" id="cd09209">
    <property type="entry name" value="Lumazine_synthase-I"/>
    <property type="match status" value="1"/>
</dbReference>
<dbReference type="FunFam" id="3.40.50.960:FF:000001">
    <property type="entry name" value="6,7-dimethyl-8-ribityllumazine synthase"/>
    <property type="match status" value="1"/>
</dbReference>
<dbReference type="Gene3D" id="3.40.50.960">
    <property type="entry name" value="Lumazine/riboflavin synthase"/>
    <property type="match status" value="1"/>
</dbReference>
<dbReference type="HAMAP" id="MF_00178">
    <property type="entry name" value="Lumazine_synth"/>
    <property type="match status" value="1"/>
</dbReference>
<dbReference type="InterPro" id="IPR034964">
    <property type="entry name" value="LS"/>
</dbReference>
<dbReference type="InterPro" id="IPR002180">
    <property type="entry name" value="LS/RS"/>
</dbReference>
<dbReference type="InterPro" id="IPR036467">
    <property type="entry name" value="LS/RS_sf"/>
</dbReference>
<dbReference type="NCBIfam" id="TIGR00114">
    <property type="entry name" value="lumazine-synth"/>
    <property type="match status" value="1"/>
</dbReference>
<dbReference type="NCBIfam" id="NF000812">
    <property type="entry name" value="PRK00061.1-4"/>
    <property type="match status" value="1"/>
</dbReference>
<dbReference type="PANTHER" id="PTHR21058:SF0">
    <property type="entry name" value="6,7-DIMETHYL-8-RIBITYLLUMAZINE SYNTHASE"/>
    <property type="match status" value="1"/>
</dbReference>
<dbReference type="PANTHER" id="PTHR21058">
    <property type="entry name" value="6,7-DIMETHYL-8-RIBITYLLUMAZINE SYNTHASE DMRL SYNTHASE LUMAZINE SYNTHASE"/>
    <property type="match status" value="1"/>
</dbReference>
<dbReference type="Pfam" id="PF00885">
    <property type="entry name" value="DMRL_synthase"/>
    <property type="match status" value="1"/>
</dbReference>
<dbReference type="SUPFAM" id="SSF52121">
    <property type="entry name" value="Lumazine synthase"/>
    <property type="match status" value="1"/>
</dbReference>
<name>RISB_SALPK</name>
<feature type="chain" id="PRO_1000098227" description="6,7-dimethyl-8-ribityllumazine synthase">
    <location>
        <begin position="1"/>
        <end position="156"/>
    </location>
</feature>
<feature type="active site" description="Proton donor" evidence="1">
    <location>
        <position position="89"/>
    </location>
</feature>
<feature type="binding site" evidence="1">
    <location>
        <position position="22"/>
    </location>
    <ligand>
        <name>5-amino-6-(D-ribitylamino)uracil</name>
        <dbReference type="ChEBI" id="CHEBI:15934"/>
    </ligand>
</feature>
<feature type="binding site" evidence="1">
    <location>
        <begin position="57"/>
        <end position="59"/>
    </location>
    <ligand>
        <name>5-amino-6-(D-ribitylamino)uracil</name>
        <dbReference type="ChEBI" id="CHEBI:15934"/>
    </ligand>
</feature>
<feature type="binding site" evidence="1">
    <location>
        <begin position="81"/>
        <end position="83"/>
    </location>
    <ligand>
        <name>5-amino-6-(D-ribitylamino)uracil</name>
        <dbReference type="ChEBI" id="CHEBI:15934"/>
    </ligand>
</feature>
<feature type="binding site" evidence="1">
    <location>
        <begin position="86"/>
        <end position="87"/>
    </location>
    <ligand>
        <name>(2S)-2-hydroxy-3-oxobutyl phosphate</name>
        <dbReference type="ChEBI" id="CHEBI:58830"/>
    </ligand>
</feature>
<feature type="binding site" evidence="1">
    <location>
        <position position="114"/>
    </location>
    <ligand>
        <name>5-amino-6-(D-ribitylamino)uracil</name>
        <dbReference type="ChEBI" id="CHEBI:15934"/>
    </ligand>
</feature>
<feature type="binding site" evidence="1">
    <location>
        <position position="128"/>
    </location>
    <ligand>
        <name>(2S)-2-hydroxy-3-oxobutyl phosphate</name>
        <dbReference type="ChEBI" id="CHEBI:58830"/>
    </ligand>
</feature>
<organism>
    <name type="scientific">Salmonella paratyphi A (strain AKU_12601)</name>
    <dbReference type="NCBI Taxonomy" id="554290"/>
    <lineage>
        <taxon>Bacteria</taxon>
        <taxon>Pseudomonadati</taxon>
        <taxon>Pseudomonadota</taxon>
        <taxon>Gammaproteobacteria</taxon>
        <taxon>Enterobacterales</taxon>
        <taxon>Enterobacteriaceae</taxon>
        <taxon>Salmonella</taxon>
    </lineage>
</organism>